<protein>
    <recommendedName>
        <fullName evidence="1">Phosphoglucosamine mutase</fullName>
        <ecNumber evidence="1">5.4.2.10</ecNumber>
    </recommendedName>
</protein>
<accession>A3PH12</accession>
<feature type="chain" id="PRO_0000305667" description="Phosphoglucosamine mutase">
    <location>
        <begin position="1"/>
        <end position="447"/>
    </location>
</feature>
<feature type="active site" description="Phosphoserine intermediate" evidence="1">
    <location>
        <position position="103"/>
    </location>
</feature>
<feature type="binding site" description="via phosphate group" evidence="1">
    <location>
        <position position="103"/>
    </location>
    <ligand>
        <name>Mg(2+)</name>
        <dbReference type="ChEBI" id="CHEBI:18420"/>
    </ligand>
</feature>
<feature type="binding site" evidence="1">
    <location>
        <position position="242"/>
    </location>
    <ligand>
        <name>Mg(2+)</name>
        <dbReference type="ChEBI" id="CHEBI:18420"/>
    </ligand>
</feature>
<feature type="binding site" evidence="1">
    <location>
        <position position="244"/>
    </location>
    <ligand>
        <name>Mg(2+)</name>
        <dbReference type="ChEBI" id="CHEBI:18420"/>
    </ligand>
</feature>
<feature type="binding site" evidence="1">
    <location>
        <position position="246"/>
    </location>
    <ligand>
        <name>Mg(2+)</name>
        <dbReference type="ChEBI" id="CHEBI:18420"/>
    </ligand>
</feature>
<feature type="modified residue" description="Phosphoserine" evidence="1">
    <location>
        <position position="103"/>
    </location>
</feature>
<dbReference type="EC" id="5.4.2.10" evidence="1"/>
<dbReference type="EMBL" id="CP000577">
    <property type="protein sequence ID" value="ABN75628.1"/>
    <property type="molecule type" value="Genomic_DNA"/>
</dbReference>
<dbReference type="RefSeq" id="WP_011840403.1">
    <property type="nucleotide sequence ID" value="NC_009049.1"/>
</dbReference>
<dbReference type="SMR" id="A3PH12"/>
<dbReference type="GeneID" id="67445653"/>
<dbReference type="KEGG" id="rsh:Rsph17029_0512"/>
<dbReference type="HOGENOM" id="CLU_016950_7_0_5"/>
<dbReference type="GO" id="GO:0005829">
    <property type="term" value="C:cytosol"/>
    <property type="evidence" value="ECO:0007669"/>
    <property type="project" value="TreeGrafter"/>
</dbReference>
<dbReference type="GO" id="GO:0000287">
    <property type="term" value="F:magnesium ion binding"/>
    <property type="evidence" value="ECO:0007669"/>
    <property type="project" value="UniProtKB-UniRule"/>
</dbReference>
<dbReference type="GO" id="GO:0008966">
    <property type="term" value="F:phosphoglucosamine mutase activity"/>
    <property type="evidence" value="ECO:0007669"/>
    <property type="project" value="UniProtKB-UniRule"/>
</dbReference>
<dbReference type="GO" id="GO:0004615">
    <property type="term" value="F:phosphomannomutase activity"/>
    <property type="evidence" value="ECO:0007669"/>
    <property type="project" value="TreeGrafter"/>
</dbReference>
<dbReference type="GO" id="GO:0005975">
    <property type="term" value="P:carbohydrate metabolic process"/>
    <property type="evidence" value="ECO:0007669"/>
    <property type="project" value="InterPro"/>
</dbReference>
<dbReference type="GO" id="GO:0009252">
    <property type="term" value="P:peptidoglycan biosynthetic process"/>
    <property type="evidence" value="ECO:0007669"/>
    <property type="project" value="TreeGrafter"/>
</dbReference>
<dbReference type="GO" id="GO:0006048">
    <property type="term" value="P:UDP-N-acetylglucosamine biosynthetic process"/>
    <property type="evidence" value="ECO:0007669"/>
    <property type="project" value="TreeGrafter"/>
</dbReference>
<dbReference type="CDD" id="cd05802">
    <property type="entry name" value="GlmM"/>
    <property type="match status" value="1"/>
</dbReference>
<dbReference type="FunFam" id="3.30.310.50:FF:000001">
    <property type="entry name" value="Phosphoglucosamine mutase"/>
    <property type="match status" value="1"/>
</dbReference>
<dbReference type="FunFam" id="3.40.120.10:FF:000001">
    <property type="entry name" value="Phosphoglucosamine mutase"/>
    <property type="match status" value="1"/>
</dbReference>
<dbReference type="FunFam" id="3.40.120.10:FF:000002">
    <property type="entry name" value="Phosphoglucosamine mutase"/>
    <property type="match status" value="1"/>
</dbReference>
<dbReference type="Gene3D" id="3.40.120.10">
    <property type="entry name" value="Alpha-D-Glucose-1,6-Bisphosphate, subunit A, domain 3"/>
    <property type="match status" value="3"/>
</dbReference>
<dbReference type="Gene3D" id="3.30.310.50">
    <property type="entry name" value="Alpha-D-phosphohexomutase, C-terminal domain"/>
    <property type="match status" value="1"/>
</dbReference>
<dbReference type="HAMAP" id="MF_01554_B">
    <property type="entry name" value="GlmM_B"/>
    <property type="match status" value="1"/>
</dbReference>
<dbReference type="InterPro" id="IPR005844">
    <property type="entry name" value="A-D-PHexomutase_a/b/a-I"/>
</dbReference>
<dbReference type="InterPro" id="IPR016055">
    <property type="entry name" value="A-D-PHexomutase_a/b/a-I/II/III"/>
</dbReference>
<dbReference type="InterPro" id="IPR005845">
    <property type="entry name" value="A-D-PHexomutase_a/b/a-II"/>
</dbReference>
<dbReference type="InterPro" id="IPR005846">
    <property type="entry name" value="A-D-PHexomutase_a/b/a-III"/>
</dbReference>
<dbReference type="InterPro" id="IPR005843">
    <property type="entry name" value="A-D-PHexomutase_C"/>
</dbReference>
<dbReference type="InterPro" id="IPR036900">
    <property type="entry name" value="A-D-PHexomutase_C_sf"/>
</dbReference>
<dbReference type="InterPro" id="IPR016066">
    <property type="entry name" value="A-D-PHexomutase_CS"/>
</dbReference>
<dbReference type="InterPro" id="IPR005841">
    <property type="entry name" value="Alpha-D-phosphohexomutase_SF"/>
</dbReference>
<dbReference type="InterPro" id="IPR006352">
    <property type="entry name" value="GlmM_bact"/>
</dbReference>
<dbReference type="InterPro" id="IPR050060">
    <property type="entry name" value="Phosphoglucosamine_mutase"/>
</dbReference>
<dbReference type="NCBIfam" id="TIGR01455">
    <property type="entry name" value="glmM"/>
    <property type="match status" value="1"/>
</dbReference>
<dbReference type="NCBIfam" id="NF008139">
    <property type="entry name" value="PRK10887.1"/>
    <property type="match status" value="1"/>
</dbReference>
<dbReference type="PANTHER" id="PTHR42946:SF1">
    <property type="entry name" value="PHOSPHOGLUCOMUTASE (ALPHA-D-GLUCOSE-1,6-BISPHOSPHATE-DEPENDENT)"/>
    <property type="match status" value="1"/>
</dbReference>
<dbReference type="PANTHER" id="PTHR42946">
    <property type="entry name" value="PHOSPHOHEXOSE MUTASE"/>
    <property type="match status" value="1"/>
</dbReference>
<dbReference type="Pfam" id="PF02878">
    <property type="entry name" value="PGM_PMM_I"/>
    <property type="match status" value="1"/>
</dbReference>
<dbReference type="Pfam" id="PF02879">
    <property type="entry name" value="PGM_PMM_II"/>
    <property type="match status" value="1"/>
</dbReference>
<dbReference type="Pfam" id="PF02880">
    <property type="entry name" value="PGM_PMM_III"/>
    <property type="match status" value="1"/>
</dbReference>
<dbReference type="Pfam" id="PF00408">
    <property type="entry name" value="PGM_PMM_IV"/>
    <property type="match status" value="1"/>
</dbReference>
<dbReference type="PRINTS" id="PR00509">
    <property type="entry name" value="PGMPMM"/>
</dbReference>
<dbReference type="SUPFAM" id="SSF55957">
    <property type="entry name" value="Phosphoglucomutase, C-terminal domain"/>
    <property type="match status" value="1"/>
</dbReference>
<dbReference type="SUPFAM" id="SSF53738">
    <property type="entry name" value="Phosphoglucomutase, first 3 domains"/>
    <property type="match status" value="3"/>
</dbReference>
<dbReference type="PROSITE" id="PS00710">
    <property type="entry name" value="PGM_PMM"/>
    <property type="match status" value="1"/>
</dbReference>
<organism>
    <name type="scientific">Cereibacter sphaeroides (strain ATCC 17029 / ATH 2.4.9)</name>
    <name type="common">Rhodobacter sphaeroides</name>
    <dbReference type="NCBI Taxonomy" id="349101"/>
    <lineage>
        <taxon>Bacteria</taxon>
        <taxon>Pseudomonadati</taxon>
        <taxon>Pseudomonadota</taxon>
        <taxon>Alphaproteobacteria</taxon>
        <taxon>Rhodobacterales</taxon>
        <taxon>Paracoccaceae</taxon>
        <taxon>Cereibacter</taxon>
    </lineage>
</organism>
<gene>
    <name evidence="1" type="primary">glmM</name>
    <name type="ordered locus">Rsph17029_0512</name>
</gene>
<keyword id="KW-0413">Isomerase</keyword>
<keyword id="KW-0460">Magnesium</keyword>
<keyword id="KW-0479">Metal-binding</keyword>
<keyword id="KW-0597">Phosphoprotein</keyword>
<name>GLMM_CERS1</name>
<proteinExistence type="inferred from homology"/>
<sequence length="447" mass="47535">MTRKLFGTDGVRGTANTHPMTAEMALRLGAAAGRYFRPVGAGSPRVVIGKDTRLSGYMLENALTAGLTSTGMNVLLLGPVPTPAVGFLTRSMRAALGVMISASHNPHEDNGIKFFGPDGFKLSDEAEAEIEAILAGEIQPAQPGNIGRAKRIEDGRGRYQEYCKTTFPSGLRLDGLKVVIDCANGAAYRAAPEVLWELGAEVIPVGVEPNGKNINLRCGSTHPEAAAEAVRAHGADVGICLDGDADRVIILDETGKEADGDQIMALFAARWADEGRLRDGTLVATVMSNLGLERFLGARGLRLERTPVGDRYVVEAMRRGGWNLGGEQSGHIVMTDFATTGDGLLAGLQFLAAMAQTGRRASDLARSFETVPQLLQNVRYAAGQEPLKAPGVQAVIRDAEVRLNGAGRLLIRKSGTEPLIRVMAECEDEALLRDVVEEIVAAVRDAA</sequence>
<reference key="1">
    <citation type="submission" date="2007-02" db="EMBL/GenBank/DDBJ databases">
        <title>Complete sequence of chromosome 1 of Rhodobacter sphaeroides ATCC 17029.</title>
        <authorList>
            <person name="Copeland A."/>
            <person name="Lucas S."/>
            <person name="Lapidus A."/>
            <person name="Barry K."/>
            <person name="Detter J.C."/>
            <person name="Glavina del Rio T."/>
            <person name="Hammon N."/>
            <person name="Israni S."/>
            <person name="Dalin E."/>
            <person name="Tice H."/>
            <person name="Pitluck S."/>
            <person name="Kiss H."/>
            <person name="Brettin T."/>
            <person name="Bruce D."/>
            <person name="Han C."/>
            <person name="Tapia R."/>
            <person name="Gilna P."/>
            <person name="Schmutz J."/>
            <person name="Larimer F."/>
            <person name="Land M."/>
            <person name="Hauser L."/>
            <person name="Kyrpides N."/>
            <person name="Mikhailova N."/>
            <person name="Richardson P."/>
            <person name="Mackenzie C."/>
            <person name="Choudhary M."/>
            <person name="Donohue T.J."/>
            <person name="Kaplan S."/>
        </authorList>
    </citation>
    <scope>NUCLEOTIDE SEQUENCE [LARGE SCALE GENOMIC DNA]</scope>
    <source>
        <strain>ATCC 17029 / ATH 2.4.9</strain>
    </source>
</reference>
<evidence type="ECO:0000255" key="1">
    <source>
        <dbReference type="HAMAP-Rule" id="MF_01554"/>
    </source>
</evidence>
<comment type="function">
    <text evidence="1">Catalyzes the conversion of glucosamine-6-phosphate to glucosamine-1-phosphate.</text>
</comment>
<comment type="catalytic activity">
    <reaction evidence="1">
        <text>alpha-D-glucosamine 1-phosphate = D-glucosamine 6-phosphate</text>
        <dbReference type="Rhea" id="RHEA:23424"/>
        <dbReference type="ChEBI" id="CHEBI:58516"/>
        <dbReference type="ChEBI" id="CHEBI:58725"/>
        <dbReference type="EC" id="5.4.2.10"/>
    </reaction>
</comment>
<comment type="cofactor">
    <cofactor evidence="1">
        <name>Mg(2+)</name>
        <dbReference type="ChEBI" id="CHEBI:18420"/>
    </cofactor>
    <text evidence="1">Binds 1 Mg(2+) ion per subunit.</text>
</comment>
<comment type="PTM">
    <text evidence="1">Activated by phosphorylation.</text>
</comment>
<comment type="similarity">
    <text evidence="1">Belongs to the phosphohexose mutase family.</text>
</comment>